<evidence type="ECO:0000255" key="1">
    <source>
        <dbReference type="HAMAP-Rule" id="MF_00074"/>
    </source>
</evidence>
<dbReference type="EC" id="2.1.1.170" evidence="1"/>
<dbReference type="EMBL" id="CP000381">
    <property type="protein sequence ID" value="ABX74086.1"/>
    <property type="molecule type" value="Genomic_DNA"/>
</dbReference>
<dbReference type="RefSeq" id="WP_012222115.1">
    <property type="nucleotide sequence ID" value="NC_010120.1"/>
</dbReference>
<dbReference type="SMR" id="A9M3R8"/>
<dbReference type="KEGG" id="nmn:NMCC_1961"/>
<dbReference type="HOGENOM" id="CLU_065341_2_0_4"/>
<dbReference type="Proteomes" id="UP000001177">
    <property type="component" value="Chromosome"/>
</dbReference>
<dbReference type="GO" id="GO:0005829">
    <property type="term" value="C:cytosol"/>
    <property type="evidence" value="ECO:0007669"/>
    <property type="project" value="TreeGrafter"/>
</dbReference>
<dbReference type="GO" id="GO:0070043">
    <property type="term" value="F:rRNA (guanine-N7-)-methyltransferase activity"/>
    <property type="evidence" value="ECO:0007669"/>
    <property type="project" value="UniProtKB-UniRule"/>
</dbReference>
<dbReference type="CDD" id="cd02440">
    <property type="entry name" value="AdoMet_MTases"/>
    <property type="match status" value="1"/>
</dbReference>
<dbReference type="FunFam" id="3.40.50.150:FF:000353">
    <property type="entry name" value="Ribosomal RNA small subunit methyltransferase G"/>
    <property type="match status" value="1"/>
</dbReference>
<dbReference type="Gene3D" id="3.40.50.150">
    <property type="entry name" value="Vaccinia Virus protein VP39"/>
    <property type="match status" value="1"/>
</dbReference>
<dbReference type="HAMAP" id="MF_00074">
    <property type="entry name" value="16SrRNA_methyltr_G"/>
    <property type="match status" value="1"/>
</dbReference>
<dbReference type="InterPro" id="IPR003682">
    <property type="entry name" value="rRNA_ssu_MeTfrase_G"/>
</dbReference>
<dbReference type="InterPro" id="IPR029063">
    <property type="entry name" value="SAM-dependent_MTases_sf"/>
</dbReference>
<dbReference type="NCBIfam" id="TIGR00138">
    <property type="entry name" value="rsmG_gidB"/>
    <property type="match status" value="1"/>
</dbReference>
<dbReference type="PANTHER" id="PTHR31760">
    <property type="entry name" value="S-ADENOSYL-L-METHIONINE-DEPENDENT METHYLTRANSFERASES SUPERFAMILY PROTEIN"/>
    <property type="match status" value="1"/>
</dbReference>
<dbReference type="PANTHER" id="PTHR31760:SF0">
    <property type="entry name" value="S-ADENOSYL-L-METHIONINE-DEPENDENT METHYLTRANSFERASES SUPERFAMILY PROTEIN"/>
    <property type="match status" value="1"/>
</dbReference>
<dbReference type="Pfam" id="PF02527">
    <property type="entry name" value="GidB"/>
    <property type="match status" value="1"/>
</dbReference>
<dbReference type="PIRSF" id="PIRSF003078">
    <property type="entry name" value="GidB"/>
    <property type="match status" value="1"/>
</dbReference>
<dbReference type="SUPFAM" id="SSF53335">
    <property type="entry name" value="S-adenosyl-L-methionine-dependent methyltransferases"/>
    <property type="match status" value="1"/>
</dbReference>
<name>RSMG_NEIM0</name>
<protein>
    <recommendedName>
        <fullName evidence="1">Ribosomal RNA small subunit methyltransferase G</fullName>
        <ecNumber evidence="1">2.1.1.170</ecNumber>
    </recommendedName>
    <alternativeName>
        <fullName evidence="1">16S rRNA 7-methylguanosine methyltransferase</fullName>
        <shortName evidence="1">16S rRNA m7G methyltransferase</shortName>
    </alternativeName>
</protein>
<sequence length="207" mass="22915">MERKERLRAGIAAMGLDILETAQDRLLAYVDLLKKWNKTYNLTALRDEEKMIVHHLLDSLTLLPYIEGAQTMLDVGSGGGQPGIPAAVCRPDVQITLLDANTKKTAFLQQAVIELGLDNVRVVSGRVEAVSDVRADVITSRAFAELADFVSWTGHLLKDGGYWAAMKGVYPQGEIDRLPQDVCVEKVQRLDVPGLDAERHIAILRKR</sequence>
<organism>
    <name type="scientific">Neisseria meningitidis serogroup C (strain 053442)</name>
    <dbReference type="NCBI Taxonomy" id="374833"/>
    <lineage>
        <taxon>Bacteria</taxon>
        <taxon>Pseudomonadati</taxon>
        <taxon>Pseudomonadota</taxon>
        <taxon>Betaproteobacteria</taxon>
        <taxon>Neisseriales</taxon>
        <taxon>Neisseriaceae</taxon>
        <taxon>Neisseria</taxon>
    </lineage>
</organism>
<proteinExistence type="inferred from homology"/>
<feature type="chain" id="PRO_1000075225" description="Ribosomal RNA small subunit methyltransferase G">
    <location>
        <begin position="1"/>
        <end position="207"/>
    </location>
</feature>
<feature type="binding site" evidence="1">
    <location>
        <position position="76"/>
    </location>
    <ligand>
        <name>S-adenosyl-L-methionine</name>
        <dbReference type="ChEBI" id="CHEBI:59789"/>
    </ligand>
</feature>
<feature type="binding site" evidence="1">
    <location>
        <position position="81"/>
    </location>
    <ligand>
        <name>S-adenosyl-L-methionine</name>
        <dbReference type="ChEBI" id="CHEBI:59789"/>
    </ligand>
</feature>
<feature type="binding site" evidence="1">
    <location>
        <begin position="127"/>
        <end position="128"/>
    </location>
    <ligand>
        <name>S-adenosyl-L-methionine</name>
        <dbReference type="ChEBI" id="CHEBI:59789"/>
    </ligand>
</feature>
<feature type="binding site" evidence="1">
    <location>
        <position position="141"/>
    </location>
    <ligand>
        <name>S-adenosyl-L-methionine</name>
        <dbReference type="ChEBI" id="CHEBI:59789"/>
    </ligand>
</feature>
<keyword id="KW-0963">Cytoplasm</keyword>
<keyword id="KW-0489">Methyltransferase</keyword>
<keyword id="KW-0698">rRNA processing</keyword>
<keyword id="KW-0949">S-adenosyl-L-methionine</keyword>
<keyword id="KW-0808">Transferase</keyword>
<accession>A9M3R8</accession>
<reference key="1">
    <citation type="journal article" date="2008" name="Genomics">
        <title>Characterization of ST-4821 complex, a unique Neisseria meningitidis clone.</title>
        <authorList>
            <person name="Peng J."/>
            <person name="Yang L."/>
            <person name="Yang F."/>
            <person name="Yang J."/>
            <person name="Yan Y."/>
            <person name="Nie H."/>
            <person name="Zhang X."/>
            <person name="Xiong Z."/>
            <person name="Jiang Y."/>
            <person name="Cheng F."/>
            <person name="Xu X."/>
            <person name="Chen S."/>
            <person name="Sun L."/>
            <person name="Li W."/>
            <person name="Shen Y."/>
            <person name="Shao Z."/>
            <person name="Liang X."/>
            <person name="Xu J."/>
            <person name="Jin Q."/>
        </authorList>
    </citation>
    <scope>NUCLEOTIDE SEQUENCE [LARGE SCALE GENOMIC DNA]</scope>
    <source>
        <strain>053442</strain>
    </source>
</reference>
<gene>
    <name evidence="1" type="primary">rsmG</name>
    <name type="ordered locus">NMCC_1961</name>
</gene>
<comment type="function">
    <text evidence="1">Specifically methylates the N7 position of guanine in position 527 of 16S rRNA.</text>
</comment>
<comment type="catalytic activity">
    <reaction evidence="1">
        <text>guanosine(527) in 16S rRNA + S-adenosyl-L-methionine = N(7)-methylguanosine(527) in 16S rRNA + S-adenosyl-L-homocysteine</text>
        <dbReference type="Rhea" id="RHEA:42732"/>
        <dbReference type="Rhea" id="RHEA-COMP:10209"/>
        <dbReference type="Rhea" id="RHEA-COMP:10210"/>
        <dbReference type="ChEBI" id="CHEBI:57856"/>
        <dbReference type="ChEBI" id="CHEBI:59789"/>
        <dbReference type="ChEBI" id="CHEBI:74269"/>
        <dbReference type="ChEBI" id="CHEBI:74480"/>
        <dbReference type="EC" id="2.1.1.170"/>
    </reaction>
</comment>
<comment type="subcellular location">
    <subcellularLocation>
        <location evidence="1">Cytoplasm</location>
    </subcellularLocation>
</comment>
<comment type="similarity">
    <text evidence="1">Belongs to the methyltransferase superfamily. RNA methyltransferase RsmG family.</text>
</comment>